<keyword id="KW-1185">Reference proteome</keyword>
<keyword id="KW-0687">Ribonucleoprotein</keyword>
<keyword id="KW-0689">Ribosomal protein</keyword>
<keyword id="KW-0694">RNA-binding</keyword>
<keyword id="KW-0699">rRNA-binding</keyword>
<gene>
    <name evidence="1" type="primary">rpmE</name>
    <name type="ordered locus">Pden_3885</name>
</gene>
<name>RL31_PARDP</name>
<feature type="chain" id="PRO_1000126679" description="Large ribosomal subunit protein bL31">
    <location>
        <begin position="1"/>
        <end position="73"/>
    </location>
</feature>
<protein>
    <recommendedName>
        <fullName evidence="1">Large ribosomal subunit protein bL31</fullName>
    </recommendedName>
    <alternativeName>
        <fullName evidence="2">50S ribosomal protein L31</fullName>
    </alternativeName>
</protein>
<comment type="function">
    <text evidence="1">Binds the 23S rRNA.</text>
</comment>
<comment type="subunit">
    <text evidence="1">Part of the 50S ribosomal subunit.</text>
</comment>
<comment type="similarity">
    <text evidence="1">Belongs to the bacterial ribosomal protein bL31 family. Type A subfamily.</text>
</comment>
<proteinExistence type="inferred from homology"/>
<reference key="1">
    <citation type="submission" date="2006-12" db="EMBL/GenBank/DDBJ databases">
        <title>Complete sequence of chromosome 2 of Paracoccus denitrificans PD1222.</title>
        <authorList>
            <person name="Copeland A."/>
            <person name="Lucas S."/>
            <person name="Lapidus A."/>
            <person name="Barry K."/>
            <person name="Detter J.C."/>
            <person name="Glavina del Rio T."/>
            <person name="Hammon N."/>
            <person name="Israni S."/>
            <person name="Dalin E."/>
            <person name="Tice H."/>
            <person name="Pitluck S."/>
            <person name="Munk A.C."/>
            <person name="Brettin T."/>
            <person name="Bruce D."/>
            <person name="Han C."/>
            <person name="Tapia R."/>
            <person name="Gilna P."/>
            <person name="Schmutz J."/>
            <person name="Larimer F."/>
            <person name="Land M."/>
            <person name="Hauser L."/>
            <person name="Kyrpides N."/>
            <person name="Lykidis A."/>
            <person name="Spiro S."/>
            <person name="Richardson D.J."/>
            <person name="Moir J.W.B."/>
            <person name="Ferguson S.J."/>
            <person name="van Spanning R.J.M."/>
            <person name="Richardson P."/>
        </authorList>
    </citation>
    <scope>NUCLEOTIDE SEQUENCE [LARGE SCALE GENOMIC DNA]</scope>
    <source>
        <strain>Pd 1222</strain>
    </source>
</reference>
<sequence length="73" mass="8062">MKADIHPDYHLIEVKMTDGTTYQVRSTWGKEGDTMSLDIDPNSHPAWTGGSAKLMDTGGRVSKFKNKYAGLGF</sequence>
<organism>
    <name type="scientific">Paracoccus denitrificans (strain Pd 1222)</name>
    <dbReference type="NCBI Taxonomy" id="318586"/>
    <lineage>
        <taxon>Bacteria</taxon>
        <taxon>Pseudomonadati</taxon>
        <taxon>Pseudomonadota</taxon>
        <taxon>Alphaproteobacteria</taxon>
        <taxon>Rhodobacterales</taxon>
        <taxon>Paracoccaceae</taxon>
        <taxon>Paracoccus</taxon>
    </lineage>
</organism>
<accession>A1B8V7</accession>
<evidence type="ECO:0000255" key="1">
    <source>
        <dbReference type="HAMAP-Rule" id="MF_00501"/>
    </source>
</evidence>
<evidence type="ECO:0000305" key="2"/>
<dbReference type="EMBL" id="CP000490">
    <property type="protein sequence ID" value="ABL71951.1"/>
    <property type="molecule type" value="Genomic_DNA"/>
</dbReference>
<dbReference type="RefSeq" id="WP_011750118.1">
    <property type="nucleotide sequence ID" value="NC_008687.1"/>
</dbReference>
<dbReference type="SMR" id="A1B8V7"/>
<dbReference type="STRING" id="318586.Pden_3885"/>
<dbReference type="EnsemblBacteria" id="ABL71951">
    <property type="protein sequence ID" value="ABL71951"/>
    <property type="gene ID" value="Pden_3885"/>
</dbReference>
<dbReference type="GeneID" id="93453545"/>
<dbReference type="KEGG" id="pde:Pden_3885"/>
<dbReference type="eggNOG" id="COG0254">
    <property type="taxonomic scope" value="Bacteria"/>
</dbReference>
<dbReference type="HOGENOM" id="CLU_114306_3_2_5"/>
<dbReference type="OrthoDB" id="9803251at2"/>
<dbReference type="Proteomes" id="UP000000361">
    <property type="component" value="Chromosome 2"/>
</dbReference>
<dbReference type="GO" id="GO:1990904">
    <property type="term" value="C:ribonucleoprotein complex"/>
    <property type="evidence" value="ECO:0007669"/>
    <property type="project" value="UniProtKB-KW"/>
</dbReference>
<dbReference type="GO" id="GO:0005840">
    <property type="term" value="C:ribosome"/>
    <property type="evidence" value="ECO:0007669"/>
    <property type="project" value="UniProtKB-KW"/>
</dbReference>
<dbReference type="GO" id="GO:0019843">
    <property type="term" value="F:rRNA binding"/>
    <property type="evidence" value="ECO:0007669"/>
    <property type="project" value="UniProtKB-KW"/>
</dbReference>
<dbReference type="GO" id="GO:0003735">
    <property type="term" value="F:structural constituent of ribosome"/>
    <property type="evidence" value="ECO:0007669"/>
    <property type="project" value="InterPro"/>
</dbReference>
<dbReference type="GO" id="GO:0006412">
    <property type="term" value="P:translation"/>
    <property type="evidence" value="ECO:0007669"/>
    <property type="project" value="UniProtKB-UniRule"/>
</dbReference>
<dbReference type="Gene3D" id="4.10.830.30">
    <property type="entry name" value="Ribosomal protein L31"/>
    <property type="match status" value="1"/>
</dbReference>
<dbReference type="HAMAP" id="MF_00501">
    <property type="entry name" value="Ribosomal_bL31_1"/>
    <property type="match status" value="1"/>
</dbReference>
<dbReference type="InterPro" id="IPR034704">
    <property type="entry name" value="Ribosomal_bL28/bL31-like_sf"/>
</dbReference>
<dbReference type="InterPro" id="IPR002150">
    <property type="entry name" value="Ribosomal_bL31"/>
</dbReference>
<dbReference type="InterPro" id="IPR027491">
    <property type="entry name" value="Ribosomal_bL31_A"/>
</dbReference>
<dbReference type="InterPro" id="IPR042105">
    <property type="entry name" value="Ribosomal_bL31_sf"/>
</dbReference>
<dbReference type="NCBIfam" id="TIGR00105">
    <property type="entry name" value="L31"/>
    <property type="match status" value="1"/>
</dbReference>
<dbReference type="NCBIfam" id="NF001809">
    <property type="entry name" value="PRK00528.1"/>
    <property type="match status" value="1"/>
</dbReference>
<dbReference type="PANTHER" id="PTHR33280">
    <property type="entry name" value="50S RIBOSOMAL PROTEIN L31, CHLOROPLASTIC"/>
    <property type="match status" value="1"/>
</dbReference>
<dbReference type="PANTHER" id="PTHR33280:SF6">
    <property type="entry name" value="LARGE RIBOSOMAL SUBUNIT PROTEIN BL31A"/>
    <property type="match status" value="1"/>
</dbReference>
<dbReference type="Pfam" id="PF01197">
    <property type="entry name" value="Ribosomal_L31"/>
    <property type="match status" value="1"/>
</dbReference>
<dbReference type="PRINTS" id="PR01249">
    <property type="entry name" value="RIBOSOMALL31"/>
</dbReference>
<dbReference type="SUPFAM" id="SSF143800">
    <property type="entry name" value="L28p-like"/>
    <property type="match status" value="1"/>
</dbReference>
<dbReference type="PROSITE" id="PS01143">
    <property type="entry name" value="RIBOSOMAL_L31"/>
    <property type="match status" value="1"/>
</dbReference>